<accession>A0A023PZC7</accession>
<name>YE152_YEAST</name>
<gene>
    <name evidence="3" type="ordered locus">YER152W-A</name>
</gene>
<organism>
    <name type="scientific">Saccharomyces cerevisiae (strain ATCC 204508 / S288c)</name>
    <name type="common">Baker's yeast</name>
    <dbReference type="NCBI Taxonomy" id="559292"/>
    <lineage>
        <taxon>Eukaryota</taxon>
        <taxon>Fungi</taxon>
        <taxon>Dikarya</taxon>
        <taxon>Ascomycota</taxon>
        <taxon>Saccharomycotina</taxon>
        <taxon>Saccharomycetes</taxon>
        <taxon>Saccharomycetales</taxon>
        <taxon>Saccharomycetaceae</taxon>
        <taxon>Saccharomyces</taxon>
    </lineage>
</organism>
<sequence>MGLRLRLVLLKGRNQRLEINRVVALLVDGGHFPLESRICEAIVDQEICWRDDERLPGIPVMWQGCLQKDVQHAIRSAAIQIQIVCPCPAPSPIFELKQLIIQKRTNLLSHPQGTFVRTVRQRMPVIGVVIVLPGLGPQYSRSRLNYCFSRQQPRARMALEEIDFLVFHYRLLARVVPCYSDAPPRFMC</sequence>
<protein>
    <recommendedName>
        <fullName evidence="1">Putative uncharacterized protein YER152W-A</fullName>
    </recommendedName>
</protein>
<proteinExistence type="uncertain"/>
<reference key="1">
    <citation type="journal article" date="1997" name="Nature">
        <title>The nucleotide sequence of Saccharomyces cerevisiae chromosome V.</title>
        <authorList>
            <person name="Dietrich F.S."/>
            <person name="Mulligan J.T."/>
            <person name="Hennessy K.M."/>
            <person name="Yelton M.A."/>
            <person name="Allen E."/>
            <person name="Araujo R."/>
            <person name="Aviles E."/>
            <person name="Berno A."/>
            <person name="Brennan T."/>
            <person name="Carpenter J."/>
            <person name="Chen E."/>
            <person name="Cherry J.M."/>
            <person name="Chung E."/>
            <person name="Duncan M."/>
            <person name="Guzman E."/>
            <person name="Hartzell G."/>
            <person name="Hunicke-Smith S."/>
            <person name="Hyman R.W."/>
            <person name="Kayser A."/>
            <person name="Komp C."/>
            <person name="Lashkari D."/>
            <person name="Lew H."/>
            <person name="Lin D."/>
            <person name="Mosedale D."/>
            <person name="Nakahara K."/>
            <person name="Namath A."/>
            <person name="Norgren R."/>
            <person name="Oefner P."/>
            <person name="Oh C."/>
            <person name="Petel F.X."/>
            <person name="Roberts D."/>
            <person name="Sehl P."/>
            <person name="Schramm S."/>
            <person name="Shogren T."/>
            <person name="Smith V."/>
            <person name="Taylor P."/>
            <person name="Wei Y."/>
            <person name="Botstein D."/>
            <person name="Davis R.W."/>
        </authorList>
    </citation>
    <scope>NUCLEOTIDE SEQUENCE [LARGE SCALE GENOMIC DNA]</scope>
    <source>
        <strain>ATCC 204508 / S288c</strain>
    </source>
</reference>
<reference key="2">
    <citation type="journal article" date="2014" name="G3 (Bethesda)">
        <title>The reference genome sequence of Saccharomyces cerevisiae: Then and now.</title>
        <authorList>
            <person name="Engel S.R."/>
            <person name="Dietrich F.S."/>
            <person name="Fisk D.G."/>
            <person name="Binkley G."/>
            <person name="Balakrishnan R."/>
            <person name="Costanzo M.C."/>
            <person name="Dwight S.S."/>
            <person name="Hitz B.C."/>
            <person name="Karra K."/>
            <person name="Nash R.S."/>
            <person name="Weng S."/>
            <person name="Wong E.D."/>
            <person name="Lloyd P."/>
            <person name="Skrzypek M.S."/>
            <person name="Miyasato S.R."/>
            <person name="Simison M."/>
            <person name="Cherry J.M."/>
        </authorList>
    </citation>
    <scope>GENOME REANNOTATION</scope>
    <source>
        <strain>ATCC 204508 / S288c</strain>
    </source>
</reference>
<evidence type="ECO:0000305" key="1"/>
<evidence type="ECO:0000305" key="2">
    <source>
    </source>
</evidence>
<evidence type="ECO:0000312" key="3">
    <source>
        <dbReference type="SGD" id="S000028761"/>
    </source>
</evidence>
<feature type="chain" id="PRO_0000431004" description="Putative uncharacterized protein YER152W-A">
    <location>
        <begin position="1"/>
        <end position="188"/>
    </location>
</feature>
<dbReference type="EMBL" id="KJ412243">
    <property type="protein sequence ID" value="AHX39286.1"/>
    <property type="molecule type" value="Genomic_DNA"/>
</dbReference>
<dbReference type="PaxDb" id="4932-YER152W-A"/>
<dbReference type="EnsemblFungi" id="YER152W-A_mRNA">
    <property type="protein sequence ID" value="YER152W-A"/>
    <property type="gene ID" value="YER152W-A"/>
</dbReference>
<dbReference type="AGR" id="SGD:S000028761"/>
<dbReference type="SGD" id="S000028761">
    <property type="gene designation" value="YER152W-A"/>
</dbReference>
<dbReference type="HOGENOM" id="CLU_1441797_0_0_1"/>
<comment type="miscellaneous">
    <text evidence="1">Partially overlaps YER152C.</text>
</comment>
<comment type="caution">
    <text evidence="2">Product of a dubious gene prediction unlikely to encode a functional protein. Because of that it is not part of the S.cerevisiae S288c complete/reference proteome set.</text>
</comment>